<proteinExistence type="inferred from homology"/>
<name>RS14_ECOUT</name>
<accession>Q1R621</accession>
<evidence type="ECO:0000255" key="1">
    <source>
        <dbReference type="HAMAP-Rule" id="MF_00537"/>
    </source>
</evidence>
<evidence type="ECO:0000305" key="2"/>
<feature type="chain" id="PRO_1000128394" description="Small ribosomal subunit protein uS14">
    <location>
        <begin position="1"/>
        <end position="101"/>
    </location>
</feature>
<dbReference type="EMBL" id="CP000243">
    <property type="protein sequence ID" value="ABE09193.1"/>
    <property type="molecule type" value="Genomic_DNA"/>
</dbReference>
<dbReference type="RefSeq" id="WP_001118930.1">
    <property type="nucleotide sequence ID" value="NZ_CP064825.1"/>
</dbReference>
<dbReference type="SMR" id="Q1R621"/>
<dbReference type="GeneID" id="93778680"/>
<dbReference type="KEGG" id="eci:UTI89_C3756"/>
<dbReference type="HOGENOM" id="CLU_139869_0_1_6"/>
<dbReference type="Proteomes" id="UP000001952">
    <property type="component" value="Chromosome"/>
</dbReference>
<dbReference type="GO" id="GO:0005737">
    <property type="term" value="C:cytoplasm"/>
    <property type="evidence" value="ECO:0007669"/>
    <property type="project" value="UniProtKB-ARBA"/>
</dbReference>
<dbReference type="GO" id="GO:0015935">
    <property type="term" value="C:small ribosomal subunit"/>
    <property type="evidence" value="ECO:0007669"/>
    <property type="project" value="TreeGrafter"/>
</dbReference>
<dbReference type="GO" id="GO:0019843">
    <property type="term" value="F:rRNA binding"/>
    <property type="evidence" value="ECO:0007669"/>
    <property type="project" value="UniProtKB-UniRule"/>
</dbReference>
<dbReference type="GO" id="GO:0003735">
    <property type="term" value="F:structural constituent of ribosome"/>
    <property type="evidence" value="ECO:0007669"/>
    <property type="project" value="InterPro"/>
</dbReference>
<dbReference type="GO" id="GO:0006412">
    <property type="term" value="P:translation"/>
    <property type="evidence" value="ECO:0007669"/>
    <property type="project" value="UniProtKB-UniRule"/>
</dbReference>
<dbReference type="FunFam" id="1.10.287.1480:FF:000001">
    <property type="entry name" value="30S ribosomal protein S14"/>
    <property type="match status" value="1"/>
</dbReference>
<dbReference type="Gene3D" id="1.10.287.1480">
    <property type="match status" value="1"/>
</dbReference>
<dbReference type="HAMAP" id="MF_00537">
    <property type="entry name" value="Ribosomal_uS14_1"/>
    <property type="match status" value="1"/>
</dbReference>
<dbReference type="InterPro" id="IPR001209">
    <property type="entry name" value="Ribosomal_uS14"/>
</dbReference>
<dbReference type="InterPro" id="IPR023036">
    <property type="entry name" value="Ribosomal_uS14_bac/plastid"/>
</dbReference>
<dbReference type="InterPro" id="IPR018271">
    <property type="entry name" value="Ribosomal_uS14_CS"/>
</dbReference>
<dbReference type="NCBIfam" id="NF006477">
    <property type="entry name" value="PRK08881.1"/>
    <property type="match status" value="1"/>
</dbReference>
<dbReference type="PANTHER" id="PTHR19836">
    <property type="entry name" value="30S RIBOSOMAL PROTEIN S14"/>
    <property type="match status" value="1"/>
</dbReference>
<dbReference type="PANTHER" id="PTHR19836:SF19">
    <property type="entry name" value="SMALL RIBOSOMAL SUBUNIT PROTEIN US14M"/>
    <property type="match status" value="1"/>
</dbReference>
<dbReference type="Pfam" id="PF00253">
    <property type="entry name" value="Ribosomal_S14"/>
    <property type="match status" value="1"/>
</dbReference>
<dbReference type="SUPFAM" id="SSF57716">
    <property type="entry name" value="Glucocorticoid receptor-like (DNA-binding domain)"/>
    <property type="match status" value="1"/>
</dbReference>
<dbReference type="PROSITE" id="PS00527">
    <property type="entry name" value="RIBOSOMAL_S14"/>
    <property type="match status" value="1"/>
</dbReference>
<sequence>MAKQSMKAREVKRVALADKYFAKRAELKAIISDVNASDEDRWNAVLKLQTLPRDSSPSRQRNRCRQTGRPHGFLRKFGLSRIKVREAAMRGEIPGLKKASW</sequence>
<keyword id="KW-0687">Ribonucleoprotein</keyword>
<keyword id="KW-0689">Ribosomal protein</keyword>
<keyword id="KW-0694">RNA-binding</keyword>
<keyword id="KW-0699">rRNA-binding</keyword>
<organism>
    <name type="scientific">Escherichia coli (strain UTI89 / UPEC)</name>
    <dbReference type="NCBI Taxonomy" id="364106"/>
    <lineage>
        <taxon>Bacteria</taxon>
        <taxon>Pseudomonadati</taxon>
        <taxon>Pseudomonadota</taxon>
        <taxon>Gammaproteobacteria</taxon>
        <taxon>Enterobacterales</taxon>
        <taxon>Enterobacteriaceae</taxon>
        <taxon>Escherichia</taxon>
    </lineage>
</organism>
<comment type="function">
    <text evidence="1">Binds 16S rRNA, required for the assembly of 30S particles and may also be responsible for determining the conformation of the 16S rRNA at the A site.</text>
</comment>
<comment type="subunit">
    <text evidence="1">Part of the 30S ribosomal subunit. Contacts proteins S3 and S10.</text>
</comment>
<comment type="similarity">
    <text evidence="1">Belongs to the universal ribosomal protein uS14 family.</text>
</comment>
<gene>
    <name evidence="1" type="primary">rpsN</name>
    <name type="ordered locus">UTI89_C3756</name>
</gene>
<protein>
    <recommendedName>
        <fullName evidence="1">Small ribosomal subunit protein uS14</fullName>
    </recommendedName>
    <alternativeName>
        <fullName evidence="2">30S ribosomal protein S14</fullName>
    </alternativeName>
</protein>
<reference key="1">
    <citation type="journal article" date="2006" name="Proc. Natl. Acad. Sci. U.S.A.">
        <title>Identification of genes subject to positive selection in uropathogenic strains of Escherichia coli: a comparative genomics approach.</title>
        <authorList>
            <person name="Chen S.L."/>
            <person name="Hung C.-S."/>
            <person name="Xu J."/>
            <person name="Reigstad C.S."/>
            <person name="Magrini V."/>
            <person name="Sabo A."/>
            <person name="Blasiar D."/>
            <person name="Bieri T."/>
            <person name="Meyer R.R."/>
            <person name="Ozersky P."/>
            <person name="Armstrong J.R."/>
            <person name="Fulton R.S."/>
            <person name="Latreille J.P."/>
            <person name="Spieth J."/>
            <person name="Hooton T.M."/>
            <person name="Mardis E.R."/>
            <person name="Hultgren S.J."/>
            <person name="Gordon J.I."/>
        </authorList>
    </citation>
    <scope>NUCLEOTIDE SEQUENCE [LARGE SCALE GENOMIC DNA]</scope>
    <source>
        <strain>UTI89 / UPEC</strain>
    </source>
</reference>